<sequence>MIIPWQDIAPETLENLIREFVLREGTDYGSVEVSLQSKIDQVKSQLEKGEAVIVFSELHETVDIQLKAKF</sequence>
<proteinExistence type="inferred from homology"/>
<protein>
    <recommendedName>
        <fullName evidence="1">UPF0270 protein VIBHAR_00073</fullName>
    </recommendedName>
</protein>
<gene>
    <name type="ordered locus">VIBHAR_00073</name>
</gene>
<dbReference type="EMBL" id="CP000789">
    <property type="protein sequence ID" value="ABU69133.1"/>
    <property type="molecule type" value="Genomic_DNA"/>
</dbReference>
<dbReference type="RefSeq" id="WP_005432763.1">
    <property type="nucleotide sequence ID" value="NC_022269.1"/>
</dbReference>
<dbReference type="SMR" id="A7MX95"/>
<dbReference type="KEGG" id="vha:VIBHAR_00073"/>
<dbReference type="PATRIC" id="fig|338187.25.peg.2448"/>
<dbReference type="Proteomes" id="UP000008152">
    <property type="component" value="Chromosome I"/>
</dbReference>
<dbReference type="Gene3D" id="1.10.10.610">
    <property type="entry name" value="YehU-like"/>
    <property type="match status" value="1"/>
</dbReference>
<dbReference type="HAMAP" id="MF_00690">
    <property type="entry name" value="UPF0270"/>
    <property type="match status" value="1"/>
</dbReference>
<dbReference type="InterPro" id="IPR010648">
    <property type="entry name" value="UPF0270"/>
</dbReference>
<dbReference type="InterPro" id="IPR036685">
    <property type="entry name" value="YehU-like_sf"/>
</dbReference>
<dbReference type="NCBIfam" id="NF003438">
    <property type="entry name" value="PRK04966.1"/>
    <property type="match status" value="1"/>
</dbReference>
<dbReference type="Pfam" id="PF06794">
    <property type="entry name" value="UPF0270"/>
    <property type="match status" value="1"/>
</dbReference>
<dbReference type="PIRSF" id="PIRSF006169">
    <property type="entry name" value="UCP006169"/>
    <property type="match status" value="1"/>
</dbReference>
<dbReference type="SUPFAM" id="SSF118001">
    <property type="entry name" value="YehU-like"/>
    <property type="match status" value="1"/>
</dbReference>
<feature type="chain" id="PRO_1000045179" description="UPF0270 protein VIBHAR_00073">
    <location>
        <begin position="1"/>
        <end position="70"/>
    </location>
</feature>
<reference key="1">
    <citation type="submission" date="2007-08" db="EMBL/GenBank/DDBJ databases">
        <authorList>
            <consortium name="The Vibrio harveyi Genome Sequencing Project"/>
            <person name="Bassler B."/>
            <person name="Clifton S.W."/>
            <person name="Fulton L."/>
            <person name="Delehaunty K."/>
            <person name="Fronick C."/>
            <person name="Harrison M."/>
            <person name="Markivic C."/>
            <person name="Fulton R."/>
            <person name="Tin-Wollam A.-M."/>
            <person name="Shah N."/>
            <person name="Pepin K."/>
            <person name="Nash W."/>
            <person name="Thiruvilangam P."/>
            <person name="Bhonagiri V."/>
            <person name="Waters C."/>
            <person name="Tu K.C."/>
            <person name="Irgon J."/>
            <person name="Wilson R.K."/>
        </authorList>
    </citation>
    <scope>NUCLEOTIDE SEQUENCE [LARGE SCALE GENOMIC DNA]</scope>
    <source>
        <strain>ATCC BAA-1116 / BB120</strain>
    </source>
</reference>
<accession>A7MX95</accession>
<name>Y073_VIBC1</name>
<organism>
    <name type="scientific">Vibrio campbellii (strain ATCC BAA-1116)</name>
    <dbReference type="NCBI Taxonomy" id="2902295"/>
    <lineage>
        <taxon>Bacteria</taxon>
        <taxon>Pseudomonadati</taxon>
        <taxon>Pseudomonadota</taxon>
        <taxon>Gammaproteobacteria</taxon>
        <taxon>Vibrionales</taxon>
        <taxon>Vibrionaceae</taxon>
        <taxon>Vibrio</taxon>
    </lineage>
</organism>
<evidence type="ECO:0000255" key="1">
    <source>
        <dbReference type="HAMAP-Rule" id="MF_00690"/>
    </source>
</evidence>
<comment type="similarity">
    <text evidence="1">Belongs to the UPF0270 family.</text>
</comment>